<dbReference type="EC" id="3.1.4.-" evidence="1"/>
<dbReference type="EC" id="2.7.7.50" evidence="1"/>
<dbReference type="EC" id="2.1.1.56" evidence="1"/>
<dbReference type="EMBL" id="X16387">
    <property type="protein sequence ID" value="CAA34423.1"/>
    <property type="molecule type" value="Genomic_RNA"/>
</dbReference>
<dbReference type="EMBL" id="X16062">
    <property type="protein sequence ID" value="CAA34198.1"/>
    <property type="molecule type" value="Genomic_RNA"/>
</dbReference>
<dbReference type="PIR" id="S06085">
    <property type="entry name" value="P3XRSR"/>
</dbReference>
<dbReference type="SMR" id="P15736"/>
<dbReference type="Proteomes" id="UP000007180">
    <property type="component" value="Genome"/>
</dbReference>
<dbReference type="GO" id="GO:0019013">
    <property type="term" value="C:viral nucleocapsid"/>
    <property type="evidence" value="ECO:0007669"/>
    <property type="project" value="UniProtKB-UniRule"/>
</dbReference>
<dbReference type="GO" id="GO:0005525">
    <property type="term" value="F:GTP binding"/>
    <property type="evidence" value="ECO:0007669"/>
    <property type="project" value="UniProtKB-UniRule"/>
</dbReference>
<dbReference type="GO" id="GO:0016787">
    <property type="term" value="F:hydrolase activity"/>
    <property type="evidence" value="ECO:0007669"/>
    <property type="project" value="UniProtKB-KW"/>
</dbReference>
<dbReference type="GO" id="GO:0004482">
    <property type="term" value="F:mRNA 5'-cap (guanine-N7-)-methyltransferase activity"/>
    <property type="evidence" value="ECO:0007669"/>
    <property type="project" value="UniProtKB-UniRule"/>
</dbReference>
<dbReference type="GO" id="GO:0004484">
    <property type="term" value="F:mRNA guanylyltransferase activity"/>
    <property type="evidence" value="ECO:0007669"/>
    <property type="project" value="UniProtKB-UniRule"/>
</dbReference>
<dbReference type="GO" id="GO:0003723">
    <property type="term" value="F:RNA binding"/>
    <property type="evidence" value="ECO:0007669"/>
    <property type="project" value="UniProtKB-UniRule"/>
</dbReference>
<dbReference type="GO" id="GO:0052170">
    <property type="term" value="P:symbiont-mediated suppression of host innate immune response"/>
    <property type="evidence" value="ECO:0007669"/>
    <property type="project" value="UniProtKB-KW"/>
</dbReference>
<dbReference type="GO" id="GO:0016032">
    <property type="term" value="P:viral process"/>
    <property type="evidence" value="ECO:0007669"/>
    <property type="project" value="UniProtKB-UniRule"/>
</dbReference>
<dbReference type="CDD" id="cd20757">
    <property type="entry name" value="capping_2-OMTase_Rotavirus"/>
    <property type="match status" value="1"/>
</dbReference>
<dbReference type="HAMAP" id="MF_04124">
    <property type="entry name" value="Rota_VP3"/>
    <property type="match status" value="1"/>
</dbReference>
<dbReference type="HAMAP" id="MF_04128">
    <property type="entry name" value="Rota_VP3_A"/>
    <property type="match status" value="1"/>
</dbReference>
<dbReference type="InterPro" id="IPR039573">
    <property type="entry name" value="NS2A-like"/>
</dbReference>
<dbReference type="InterPro" id="IPR011181">
    <property type="entry name" value="VP3_Rotav"/>
</dbReference>
<dbReference type="Pfam" id="PF05213">
    <property type="entry name" value="Corona_NS2A"/>
    <property type="match status" value="1"/>
</dbReference>
<dbReference type="Pfam" id="PF06929">
    <property type="entry name" value="Rotavirus_VP3"/>
    <property type="match status" value="1"/>
</dbReference>
<dbReference type="PIRSF" id="PIRSF004015">
    <property type="entry name" value="LigT_rotavirus"/>
    <property type="match status" value="1"/>
</dbReference>
<dbReference type="PROSITE" id="PS51589">
    <property type="entry name" value="SAM_MT56_VP3"/>
    <property type="match status" value="1"/>
</dbReference>
<organism>
    <name type="scientific">Rotavirus A (strain RVA/SA11-Both/G3P5B[2])</name>
    <name type="common">RV-A</name>
    <name type="synonym">Simian Agent 11 (strain Both)</name>
    <dbReference type="NCBI Taxonomy" id="37137"/>
    <lineage>
        <taxon>Viruses</taxon>
        <taxon>Riboviria</taxon>
        <taxon>Orthornavirae</taxon>
        <taxon>Duplornaviricota</taxon>
        <taxon>Resentoviricetes</taxon>
        <taxon>Reovirales</taxon>
        <taxon>Sedoreoviridae</taxon>
        <taxon>Rotavirus</taxon>
        <taxon>Rotavirus A</taxon>
    </lineage>
</organism>
<reference key="1">
    <citation type="journal article" date="1990" name="Virology">
        <title>Completion of the genomic sequence of the simian rotavirus SA11: nucleotide sequences of segments 1, 2, and 3.</title>
        <authorList>
            <person name="Mitchell D.B."/>
            <person name="Both G.W."/>
        </authorList>
    </citation>
    <scope>NUCLEOTIDE SEQUENCE [GENOMIC RNA]</scope>
</reference>
<reference key="2">
    <citation type="journal article" date="1989" name="Nucleic Acids Res.">
        <title>Nucleotide sequence of the simian rotavirus SA11 genome segment 3.</title>
        <authorList>
            <person name="Liu M."/>
            <person name="Estes M.K."/>
        </authorList>
    </citation>
    <scope>NUCLEOTIDE SEQUENCE [GENOMIC RNA]</scope>
</reference>
<evidence type="ECO:0000255" key="1">
    <source>
        <dbReference type="HAMAP-Rule" id="MF_04128"/>
    </source>
</evidence>
<evidence type="ECO:0000305" key="2"/>
<accession>P15736</accession>
<feature type="chain" id="PRO_0000149537" description="Protein VP3">
    <location>
        <begin position="1"/>
        <end position="835"/>
    </location>
</feature>
<feature type="region of interest" description="N7-methyltransferase activity" evidence="1">
    <location>
        <begin position="171"/>
        <end position="245"/>
    </location>
</feature>
<feature type="region of interest" description="2'-O-methyltransferase activity" evidence="1">
    <location>
        <begin position="246"/>
        <end position="428"/>
    </location>
</feature>
<feature type="region of interest" description="N7-methyltransferase activity" evidence="1">
    <location>
        <begin position="429"/>
        <end position="555"/>
    </location>
</feature>
<feature type="region of interest" description="GTase/RTPase activity" evidence="1">
    <location>
        <begin position="556"/>
        <end position="692"/>
    </location>
</feature>
<feature type="region of interest" description="2'-5'-phosphodiesterase activity" evidence="1">
    <location>
        <begin position="693"/>
        <end position="835"/>
    </location>
</feature>
<feature type="active site" description="For 2'-5'-phosphodiesterase activity" evidence="1">
    <location>
        <position position="718"/>
    </location>
</feature>
<feature type="active site" description="For 2'-5'-phosphodiesterase activity" evidence="1">
    <location>
        <position position="720"/>
    </location>
</feature>
<feature type="active site" description="For 2'-5'-phosphodiesterase activity" evidence="1">
    <location>
        <position position="797"/>
    </location>
</feature>
<feature type="active site" description="For 2'-5'-phosphodiesterase activity" evidence="1">
    <location>
        <position position="799"/>
    </location>
</feature>
<feature type="sequence conflict" description="In Ref. 2; CAA34198." evidence="2" ref="2">
    <original>I</original>
    <variation>T</variation>
    <location>
        <position position="25"/>
    </location>
</feature>
<feature type="sequence conflict" description="In Ref. 2; CAA34198." evidence="2" ref="2">
    <original>G</original>
    <variation>A</variation>
    <location>
        <position position="136"/>
    </location>
</feature>
<feature type="sequence conflict" description="In Ref. 2; CAA34198." evidence="2" ref="2">
    <original>H</original>
    <variation>D</variation>
    <location>
        <position position="388"/>
    </location>
</feature>
<feature type="sequence conflict" description="In Ref. 2; CAA34198." evidence="2" ref="2">
    <original>I</original>
    <variation>V</variation>
    <location>
        <position position="613"/>
    </location>
</feature>
<proteinExistence type="inferred from homology"/>
<comment type="function">
    <text evidence="1">Multifunctional enzyme involved in mRNA capping. Catalyzes the formation of the 5' cap structure on the viral plus-strand transcripts. Specifically binds to GTP and displays guanylyltransferase and methyltransferase activities. Has affinity for ssRNA but not for dsRNA. Capping activity is non-specific and caps RNAs that initiate with either a G or an A residue. Together with VP1 polymerase, forms a VP1-VP3 complex positioned near the channels situated at each of the five-fold vertices of the core. Following infection, the outermost layer of the virus is lost, leaving a double-layered particle (DLP) made up of the core and VP6 shell. VP1 then catalyzes the transcription of fully conservative plus-strand genomic RNAs that are capped by VP3 and extruded through the DLP's channels into the cytoplasm where they function as mRNAs for translation of viral proteins. DLPs probably have an RNA triphosphatase activity as well, whereas open cores do not.</text>
</comment>
<comment type="function">
    <text evidence="1">Counteracts the host innate immune response thanks to its phosphodiesterase that degrades the 5'-triphosphorylated, 2'-5' linked adenylate oligomers produced by the host cell IFN-inducible 2',5'-oligoadenylate synthetase (OAS). The host RNaseL is therefore not activated.</text>
</comment>
<comment type="catalytic activity">
    <reaction evidence="1">
        <text>a 5'-end diphospho-ribonucleoside in mRNA + GTP + H(+) = a 5'-end (5'-triphosphoguanosine)-ribonucleoside in mRNA + diphosphate</text>
        <dbReference type="Rhea" id="RHEA:67012"/>
        <dbReference type="Rhea" id="RHEA-COMP:17165"/>
        <dbReference type="Rhea" id="RHEA-COMP:17166"/>
        <dbReference type="ChEBI" id="CHEBI:15378"/>
        <dbReference type="ChEBI" id="CHEBI:33019"/>
        <dbReference type="ChEBI" id="CHEBI:37565"/>
        <dbReference type="ChEBI" id="CHEBI:167616"/>
        <dbReference type="ChEBI" id="CHEBI:167617"/>
        <dbReference type="EC" id="2.7.7.50"/>
    </reaction>
</comment>
<comment type="catalytic activity">
    <reaction evidence="1">
        <text>a 5'-end (5'-triphosphoguanosine)-ribonucleoside in mRNA + S-adenosyl-L-methionine = a 5'-end (N(7)-methyl 5'-triphosphoguanosine)-ribonucleoside in mRNA + S-adenosyl-L-homocysteine</text>
        <dbReference type="Rhea" id="RHEA:67008"/>
        <dbReference type="Rhea" id="RHEA-COMP:17166"/>
        <dbReference type="Rhea" id="RHEA-COMP:17167"/>
        <dbReference type="ChEBI" id="CHEBI:57856"/>
        <dbReference type="ChEBI" id="CHEBI:59789"/>
        <dbReference type="ChEBI" id="CHEBI:156461"/>
        <dbReference type="ChEBI" id="CHEBI:167617"/>
        <dbReference type="EC" id="2.1.1.56"/>
    </reaction>
</comment>
<comment type="catalytic activity">
    <reaction evidence="1">
        <text>5'-triphosphoadenylyl-(2'-&gt;5')-adenylyl-(2'-&gt;5')-adenosine + 2 H2O = 2 AMP + ATP + 2 H(+)</text>
        <dbReference type="Rhea" id="RHEA:45964"/>
        <dbReference type="ChEBI" id="CHEBI:15377"/>
        <dbReference type="ChEBI" id="CHEBI:15378"/>
        <dbReference type="ChEBI" id="CHEBI:30616"/>
        <dbReference type="ChEBI" id="CHEBI:67143"/>
        <dbReference type="ChEBI" id="CHEBI:456215"/>
    </reaction>
</comment>
<comment type="subunit">
    <text evidence="1">Interacts with VP1. Interacts with VP2.</text>
</comment>
<comment type="subcellular location">
    <subcellularLocation>
        <location evidence="1">Virion</location>
    </subcellularLocation>
    <text evidence="1">Attached inside the inner capsid as a minor component. There are about 11 to 12 copies per virion.</text>
</comment>
<comment type="domain">
    <text evidence="1">Contains a bipartite N7-methyltransferase domain, a 2'-O-methyltransferase domain and a GTase/RTPase domain. The C-terminus contains a phosphodiesterase domain that degrades the 5'-triphosphorylated, 2'-5' linked adenylate oligomers produced by the host cell in response to IFN stimulation.</text>
</comment>
<comment type="similarity">
    <text evidence="1">Belongs to the rotavirus VP3 family.</text>
</comment>
<name>VP3_ROTS1</name>
<protein>
    <recommendedName>
        <fullName evidence="1">Protein VP3</fullName>
    </recommendedName>
    <domain>
        <recommendedName>
            <fullName evidence="1">2',5'-phosphodiesterase</fullName>
            <ecNumber evidence="1">3.1.4.-</ecNumber>
        </recommendedName>
    </domain>
    <domain>
        <recommendedName>
            <fullName evidence="1">mRNA guanylyltransferase</fullName>
            <ecNumber evidence="1">2.7.7.50</ecNumber>
        </recommendedName>
    </domain>
    <domain>
        <recommendedName>
            <fullName evidence="1">mRNA (guanine-N(7))-methyltransferase</fullName>
            <ecNumber evidence="1">2.1.1.56</ecNumber>
        </recommendedName>
    </domain>
</protein>
<organismHost>
    <name type="scientific">Macaca mulatta</name>
    <name type="common">Rhesus macaque</name>
    <dbReference type="NCBI Taxonomy" id="9544"/>
</organismHost>
<sequence length="835" mass="98141">MKVLALRHSVAQVYADTQVYVHDDIKDSYENAFLISNLTTHNILYLNYSIKTLEILNKSGIAAIALQSLEELFTLIRCNFTYDYELDIIYLHDYSYYTNNEIRTDQHWITKTNIEEYLLPGWKLTYVGYNGSETRGHYNFSFKCQNAATDDDLIIEYIYSEALDFQNFMLKKIKERMTTSLPIARLSNRVFRDKLFPSLLKEHKNVVNVGPRNESMFTFLNYPTIKQFSNGAYLVKDTIKLKQERWLGKRISQFDIGQYKNMLNVLTAIYYYYNLYKSKPIIYMIGSAPSYWIYDVRHYSDFFFETWDPLDTPYSSIHHKELFFINDVKKLKDNSILYIDIRTDRGNADWKKWRKTVEEQTINNLDIAYEYLRTGKAKVCCVKMTAMHLELPISAKLLHHPTTEIRSEFYLLLDTWDLTNIRRFIPKGVLYSFINNIITENVFIQQPFKVKVLNDSYIVALYALSNDFNNRSEVIKLINNQKQSLITVRINNTFKDEPKVGFKNIYDWTFLPTDFDTKEAIITSYDGCLGLFGLSISLASKPTGNNHLFILSGTDKYYKLDQFANHTSISRRSHQIRFSESATSYSGYIFRDLSNNNFNLIGTNIENSVSGHIYNALIYYRYNYSFDLKRWIYLHSIDKVDIEGGKYYEHAPIELIYACRSAKEFATLQDDLTVLRYSNEIENYINTVYSITYADDPNYFIGIQFRNIPYKYDVKIPHLTFGVLHISDNMVPDVIDILKIMKNELFKMDITTSYTYMLSDGIYVANVSGVLSTYFKIYNVFYKNQITFGQSRMFIPHITLSFNNMRTVRIETTKLQIKSIYLRKIKGDTVFDMVE</sequence>
<keyword id="KW-0342">GTP-binding</keyword>
<keyword id="KW-0945">Host-virus interaction</keyword>
<keyword id="KW-0378">Hydrolase</keyword>
<keyword id="KW-1090">Inhibition of host innate immune response by virus</keyword>
<keyword id="KW-0489">Methyltransferase</keyword>
<keyword id="KW-0506">mRNA capping</keyword>
<keyword id="KW-0507">mRNA processing</keyword>
<keyword id="KW-0511">Multifunctional enzyme</keyword>
<keyword id="KW-0547">Nucleotide-binding</keyword>
<keyword id="KW-0548">Nucleotidyltransferase</keyword>
<keyword id="KW-1185">Reference proteome</keyword>
<keyword id="KW-0694">RNA-binding</keyword>
<keyword id="KW-0949">S-adenosyl-L-methionine</keyword>
<keyword id="KW-0808">Transferase</keyword>
<keyword id="KW-0899">Viral immunoevasion</keyword>
<keyword id="KW-0946">Virion</keyword>